<protein>
    <recommendedName>
        <fullName evidence="1">Argininosuccinate synthase</fullName>
        <ecNumber evidence="1">6.3.4.5</ecNumber>
    </recommendedName>
    <alternativeName>
        <fullName evidence="1">Citrulline--aspartate ligase</fullName>
    </alternativeName>
</protein>
<organism>
    <name type="scientific">Oceanobacillus iheyensis (strain DSM 14371 / CIP 107618 / JCM 11309 / KCTC 3954 / HTE831)</name>
    <dbReference type="NCBI Taxonomy" id="221109"/>
    <lineage>
        <taxon>Bacteria</taxon>
        <taxon>Bacillati</taxon>
        <taxon>Bacillota</taxon>
        <taxon>Bacilli</taxon>
        <taxon>Bacillales</taxon>
        <taxon>Bacillaceae</taxon>
        <taxon>Oceanobacillus</taxon>
    </lineage>
</organism>
<reference key="1">
    <citation type="journal article" date="2002" name="Nucleic Acids Res.">
        <title>Genome sequence of Oceanobacillus iheyensis isolated from the Iheya Ridge and its unexpected adaptive capabilities to extreme environments.</title>
        <authorList>
            <person name="Takami H."/>
            <person name="Takaki Y."/>
            <person name="Uchiyama I."/>
        </authorList>
    </citation>
    <scope>NUCLEOTIDE SEQUENCE [LARGE SCALE GENOMIC DNA]</scope>
    <source>
        <strain>DSM 14371 / CIP 107618 / JCM 11309 / KCTC 3954 / HTE831</strain>
    </source>
</reference>
<accession>Q8ELT8</accession>
<name>ASSY_OCEIH</name>
<proteinExistence type="inferred from homology"/>
<evidence type="ECO:0000255" key="1">
    <source>
        <dbReference type="HAMAP-Rule" id="MF_00005"/>
    </source>
</evidence>
<gene>
    <name evidence="1" type="primary">argG</name>
    <name type="ordered locus">OB3129</name>
</gene>
<sequence length="417" mass="46069">MTKEKIVLAYSGGLDTSVAVKWLQDKYNYDVIAVALDVGEGKDLDFVKKKALDVGAIKSYVIDAKNLFAEEYVLPALQANLLYEGKYPLISALSRPLISKILVDIAEEEGAVAVAHGCTGKGNDQVRFDVSFTALNPNLKIVAPVREWAMSREEEIEYAKSHGIPIPINLDSPYSIDQNLWGRSNECGILEDPWAEAPKDAYDLTIDPVDAPEDPEVIQITFKKGKPVSIDGKEMPLDELILQLNTIAGKHGVGRIDHVENRLVGIKSREIYEAPAATTLIAAHQELEALTLPREVAEFKPTIEQKLAQTVYYGLWYSPLTEALQSFIEKTQEHVSGTVKVKLYKGHAQVIGRESENSLYDFDLATYNKADAFDHDAALGFIKLWGLPTQVHSAVNGPQGKKSIEKVDLEVKEAVKP</sequence>
<comment type="catalytic activity">
    <reaction evidence="1">
        <text>L-citrulline + L-aspartate + ATP = 2-(N(omega)-L-arginino)succinate + AMP + diphosphate + H(+)</text>
        <dbReference type="Rhea" id="RHEA:10932"/>
        <dbReference type="ChEBI" id="CHEBI:15378"/>
        <dbReference type="ChEBI" id="CHEBI:29991"/>
        <dbReference type="ChEBI" id="CHEBI:30616"/>
        <dbReference type="ChEBI" id="CHEBI:33019"/>
        <dbReference type="ChEBI" id="CHEBI:57472"/>
        <dbReference type="ChEBI" id="CHEBI:57743"/>
        <dbReference type="ChEBI" id="CHEBI:456215"/>
        <dbReference type="EC" id="6.3.4.5"/>
    </reaction>
</comment>
<comment type="pathway">
    <text evidence="1">Amino-acid biosynthesis; L-arginine biosynthesis; L-arginine from L-ornithine and carbamoyl phosphate: step 2/3.</text>
</comment>
<comment type="subunit">
    <text evidence="1">Homotetramer.</text>
</comment>
<comment type="subcellular location">
    <subcellularLocation>
        <location evidence="1">Cytoplasm</location>
    </subcellularLocation>
</comment>
<comment type="similarity">
    <text evidence="1">Belongs to the argininosuccinate synthase family. Type 1 subfamily.</text>
</comment>
<feature type="chain" id="PRO_0000148620" description="Argininosuccinate synthase">
    <location>
        <begin position="1"/>
        <end position="417"/>
    </location>
</feature>
<feature type="binding site" evidence="1">
    <location>
        <begin position="9"/>
        <end position="17"/>
    </location>
    <ligand>
        <name>ATP</name>
        <dbReference type="ChEBI" id="CHEBI:30616"/>
    </ligand>
</feature>
<feature type="binding site" evidence="1">
    <location>
        <position position="87"/>
    </location>
    <ligand>
        <name>L-citrulline</name>
        <dbReference type="ChEBI" id="CHEBI:57743"/>
    </ligand>
</feature>
<feature type="binding site" evidence="1">
    <location>
        <position position="117"/>
    </location>
    <ligand>
        <name>ATP</name>
        <dbReference type="ChEBI" id="CHEBI:30616"/>
    </ligand>
</feature>
<feature type="binding site" evidence="1">
    <location>
        <position position="119"/>
    </location>
    <ligand>
        <name>L-aspartate</name>
        <dbReference type="ChEBI" id="CHEBI:29991"/>
    </ligand>
</feature>
<feature type="binding site" evidence="1">
    <location>
        <position position="123"/>
    </location>
    <ligand>
        <name>L-aspartate</name>
        <dbReference type="ChEBI" id="CHEBI:29991"/>
    </ligand>
</feature>
<feature type="binding site" evidence="1">
    <location>
        <position position="123"/>
    </location>
    <ligand>
        <name>L-citrulline</name>
        <dbReference type="ChEBI" id="CHEBI:57743"/>
    </ligand>
</feature>
<feature type="binding site" evidence="1">
    <location>
        <position position="124"/>
    </location>
    <ligand>
        <name>L-aspartate</name>
        <dbReference type="ChEBI" id="CHEBI:29991"/>
    </ligand>
</feature>
<feature type="binding site" evidence="1">
    <location>
        <position position="127"/>
    </location>
    <ligand>
        <name>L-citrulline</name>
        <dbReference type="ChEBI" id="CHEBI:57743"/>
    </ligand>
</feature>
<feature type="binding site" evidence="1">
    <location>
        <position position="175"/>
    </location>
    <ligand>
        <name>L-citrulline</name>
        <dbReference type="ChEBI" id="CHEBI:57743"/>
    </ligand>
</feature>
<feature type="binding site" evidence="1">
    <location>
        <position position="184"/>
    </location>
    <ligand>
        <name>L-citrulline</name>
        <dbReference type="ChEBI" id="CHEBI:57743"/>
    </ligand>
</feature>
<feature type="binding site" evidence="1">
    <location>
        <position position="260"/>
    </location>
    <ligand>
        <name>L-citrulline</name>
        <dbReference type="ChEBI" id="CHEBI:57743"/>
    </ligand>
</feature>
<feature type="binding site" evidence="1">
    <location>
        <position position="272"/>
    </location>
    <ligand>
        <name>L-citrulline</name>
        <dbReference type="ChEBI" id="CHEBI:57743"/>
    </ligand>
</feature>
<keyword id="KW-0028">Amino-acid biosynthesis</keyword>
<keyword id="KW-0055">Arginine biosynthesis</keyword>
<keyword id="KW-0067">ATP-binding</keyword>
<keyword id="KW-0963">Cytoplasm</keyword>
<keyword id="KW-0436">Ligase</keyword>
<keyword id="KW-0547">Nucleotide-binding</keyword>
<keyword id="KW-1185">Reference proteome</keyword>
<dbReference type="EC" id="6.3.4.5" evidence="1"/>
<dbReference type="EMBL" id="BA000028">
    <property type="protein sequence ID" value="BAC15085.1"/>
    <property type="molecule type" value="Genomic_DNA"/>
</dbReference>
<dbReference type="RefSeq" id="WP_011067526.1">
    <property type="nucleotide sequence ID" value="NC_004193.1"/>
</dbReference>
<dbReference type="SMR" id="Q8ELT8"/>
<dbReference type="STRING" id="221109.gene:10735381"/>
<dbReference type="KEGG" id="oih:OB3129"/>
<dbReference type="eggNOG" id="COG0137">
    <property type="taxonomic scope" value="Bacteria"/>
</dbReference>
<dbReference type="HOGENOM" id="CLU_032784_4_2_9"/>
<dbReference type="OrthoDB" id="9801641at2"/>
<dbReference type="PhylomeDB" id="Q8ELT8"/>
<dbReference type="UniPathway" id="UPA00068">
    <property type="reaction ID" value="UER00113"/>
</dbReference>
<dbReference type="Proteomes" id="UP000000822">
    <property type="component" value="Chromosome"/>
</dbReference>
<dbReference type="GO" id="GO:0005737">
    <property type="term" value="C:cytoplasm"/>
    <property type="evidence" value="ECO:0007669"/>
    <property type="project" value="UniProtKB-SubCell"/>
</dbReference>
<dbReference type="GO" id="GO:0004055">
    <property type="term" value="F:argininosuccinate synthase activity"/>
    <property type="evidence" value="ECO:0007669"/>
    <property type="project" value="UniProtKB-UniRule"/>
</dbReference>
<dbReference type="GO" id="GO:0005524">
    <property type="term" value="F:ATP binding"/>
    <property type="evidence" value="ECO:0007669"/>
    <property type="project" value="UniProtKB-UniRule"/>
</dbReference>
<dbReference type="GO" id="GO:0000053">
    <property type="term" value="P:argininosuccinate metabolic process"/>
    <property type="evidence" value="ECO:0007669"/>
    <property type="project" value="TreeGrafter"/>
</dbReference>
<dbReference type="GO" id="GO:0006526">
    <property type="term" value="P:L-arginine biosynthetic process"/>
    <property type="evidence" value="ECO:0007669"/>
    <property type="project" value="UniProtKB-UniRule"/>
</dbReference>
<dbReference type="GO" id="GO:0000050">
    <property type="term" value="P:urea cycle"/>
    <property type="evidence" value="ECO:0007669"/>
    <property type="project" value="TreeGrafter"/>
</dbReference>
<dbReference type="CDD" id="cd01999">
    <property type="entry name" value="ASS"/>
    <property type="match status" value="1"/>
</dbReference>
<dbReference type="FunFam" id="1.20.5.470:FF:000002">
    <property type="entry name" value="Argininosuccinate synthase"/>
    <property type="match status" value="1"/>
</dbReference>
<dbReference type="FunFam" id="3.40.50.620:FF:000038">
    <property type="entry name" value="Argininosuccinate synthase"/>
    <property type="match status" value="1"/>
</dbReference>
<dbReference type="FunFam" id="3.90.1260.10:FF:000007">
    <property type="entry name" value="Argininosuccinate synthase"/>
    <property type="match status" value="1"/>
</dbReference>
<dbReference type="Gene3D" id="3.90.1260.10">
    <property type="entry name" value="Argininosuccinate synthetase, chain A, domain 2"/>
    <property type="match status" value="1"/>
</dbReference>
<dbReference type="Gene3D" id="3.40.50.620">
    <property type="entry name" value="HUPs"/>
    <property type="match status" value="1"/>
</dbReference>
<dbReference type="Gene3D" id="1.20.5.470">
    <property type="entry name" value="Single helix bin"/>
    <property type="match status" value="1"/>
</dbReference>
<dbReference type="HAMAP" id="MF_00005">
    <property type="entry name" value="Arg_succ_synth_type1"/>
    <property type="match status" value="1"/>
</dbReference>
<dbReference type="InterPro" id="IPR048268">
    <property type="entry name" value="Arginosuc_syn_C"/>
</dbReference>
<dbReference type="InterPro" id="IPR048267">
    <property type="entry name" value="Arginosuc_syn_N"/>
</dbReference>
<dbReference type="InterPro" id="IPR001518">
    <property type="entry name" value="Arginosuc_synth"/>
</dbReference>
<dbReference type="InterPro" id="IPR018223">
    <property type="entry name" value="Arginosuc_synth_CS"/>
</dbReference>
<dbReference type="InterPro" id="IPR023434">
    <property type="entry name" value="Arginosuc_synth_type_1_subfam"/>
</dbReference>
<dbReference type="InterPro" id="IPR024074">
    <property type="entry name" value="AS_cat/multimer_dom_body"/>
</dbReference>
<dbReference type="InterPro" id="IPR014729">
    <property type="entry name" value="Rossmann-like_a/b/a_fold"/>
</dbReference>
<dbReference type="NCBIfam" id="TIGR00032">
    <property type="entry name" value="argG"/>
    <property type="match status" value="1"/>
</dbReference>
<dbReference type="NCBIfam" id="NF001770">
    <property type="entry name" value="PRK00509.1"/>
    <property type="match status" value="1"/>
</dbReference>
<dbReference type="PANTHER" id="PTHR11587">
    <property type="entry name" value="ARGININOSUCCINATE SYNTHASE"/>
    <property type="match status" value="1"/>
</dbReference>
<dbReference type="PANTHER" id="PTHR11587:SF2">
    <property type="entry name" value="ARGININOSUCCINATE SYNTHASE"/>
    <property type="match status" value="1"/>
</dbReference>
<dbReference type="Pfam" id="PF20979">
    <property type="entry name" value="Arginosuc_syn_C"/>
    <property type="match status" value="1"/>
</dbReference>
<dbReference type="Pfam" id="PF00764">
    <property type="entry name" value="Arginosuc_synth"/>
    <property type="match status" value="1"/>
</dbReference>
<dbReference type="SUPFAM" id="SSF52402">
    <property type="entry name" value="Adenine nucleotide alpha hydrolases-like"/>
    <property type="match status" value="1"/>
</dbReference>
<dbReference type="SUPFAM" id="SSF69864">
    <property type="entry name" value="Argininosuccinate synthetase, C-terminal domain"/>
    <property type="match status" value="1"/>
</dbReference>
<dbReference type="PROSITE" id="PS00564">
    <property type="entry name" value="ARGININOSUCCIN_SYN_1"/>
    <property type="match status" value="1"/>
</dbReference>
<dbReference type="PROSITE" id="PS00565">
    <property type="entry name" value="ARGININOSUCCIN_SYN_2"/>
    <property type="match status" value="1"/>
</dbReference>